<protein>
    <recommendedName>
        <fullName>Peptidoglycan hydrolase P7</fullName>
    </recommendedName>
    <alternativeName>
        <fullName>Protein VII</fullName>
    </alternativeName>
</protein>
<proteinExistence type="evidence at protein level"/>
<feature type="chain" id="PRO_0000339904" description="Peptidoglycan hydrolase P7">
    <location>
        <begin position="1"/>
        <end position="34"/>
    </location>
</feature>
<feature type="transmembrane region" description="Helical" evidence="1">
    <location>
        <begin position="10"/>
        <end position="26"/>
    </location>
</feature>
<keyword id="KW-1231">Capsid inner membrane protein</keyword>
<keyword id="KW-1235">Degradation of host cell envelope components during virus entry</keyword>
<keyword id="KW-1236">Degradation of host peptidoglycans during virus entry</keyword>
<keyword id="KW-0903">Direct protein sequencing</keyword>
<keyword id="KW-0472">Membrane</keyword>
<keyword id="KW-1185">Reference proteome</keyword>
<keyword id="KW-0812">Transmembrane</keyword>
<keyword id="KW-1133">Transmembrane helix</keyword>
<keyword id="KW-0946">Virion</keyword>
<keyword id="KW-1160">Virus entry into host cell</keyword>
<gene>
    <name type="primary">VII</name>
</gene>
<organismHost>
    <name type="scientific">Pseudoalteromonas espejiana</name>
    <dbReference type="NCBI Taxonomy" id="28107"/>
</organismHost>
<name>EXLYS_BPPM2</name>
<reference key="1">
    <citation type="journal article" date="1999" name="Virology">
        <title>The complete genome sequence of PM2, the first lipid-containing bacterial virus to be isolated.</title>
        <authorList>
            <person name="Maennistoe R.H."/>
            <person name="Kivelae H.M."/>
            <person name="Paulin L."/>
            <person name="Bamford D.H."/>
            <person name="Bamford J.K."/>
        </authorList>
    </citation>
    <scope>NUCLEOTIDE SEQUENCE [GENOMIC DNA]</scope>
</reference>
<reference key="2">
    <citation type="journal article" date="1999" name="Virology">
        <title>Purification and protein composition of PM2, the first lipid-containing bacterial virus to be isolated.</title>
        <authorList>
            <person name="Kivelae H.M."/>
            <person name="Maennistoe R.H."/>
            <person name="Kalkkinen N."/>
            <person name="Bamford D.H."/>
        </authorList>
    </citation>
    <scope>PROTEIN SEQUENCE OF 1-10</scope>
</reference>
<reference key="3">
    <citation type="journal article" date="2002" name="J. Virol.">
        <title>Bacteriophage PM2 has a protein capsid surrounding a spherical proteinaceous lipid core.</title>
        <authorList>
            <person name="Kivelae H.M."/>
            <person name="Kalkkinen N."/>
            <person name="Bamford D.H."/>
        </authorList>
    </citation>
    <scope>PROTEIN SEQUENCE OF 1-7</scope>
    <scope>SUBCELLULAR LOCATION</scope>
</reference>
<reference key="4">
    <citation type="journal article" date="2004" name="J. Bacteriol.">
        <title>Penetration of membrane-containing double-stranded-DNA bacteriophage PM2 into Pseudoalteromonas hosts.</title>
        <authorList>
            <person name="Kivelae H.M."/>
            <person name="Daugelavicius R."/>
            <person name="Hankkio R.H."/>
            <person name="Bamford J.K."/>
            <person name="Bamford D.H."/>
        </authorList>
    </citation>
    <scope>PROTEIN SEQUENCE OF 1-8</scope>
    <scope>FUNCTION</scope>
</reference>
<dbReference type="EMBL" id="AF155037">
    <property type="protein sequence ID" value="AAD43548.1"/>
    <property type="molecule type" value="Genomic_DNA"/>
</dbReference>
<dbReference type="RefSeq" id="NP_049902.1">
    <property type="nucleotide sequence ID" value="NC_000867.1"/>
</dbReference>
<dbReference type="SMR" id="Q9XJR8"/>
<dbReference type="KEGG" id="vg:1262042"/>
<dbReference type="Proteomes" id="UP000002136">
    <property type="component" value="Genome"/>
</dbReference>
<dbReference type="GO" id="GO:0016020">
    <property type="term" value="C:membrane"/>
    <property type="evidence" value="ECO:0007669"/>
    <property type="project" value="UniProtKB-KW"/>
</dbReference>
<dbReference type="GO" id="GO:0039641">
    <property type="term" value="C:viral inner membrane"/>
    <property type="evidence" value="ECO:0007669"/>
    <property type="project" value="UniProtKB-KW"/>
</dbReference>
<dbReference type="GO" id="GO:0055036">
    <property type="term" value="C:virion membrane"/>
    <property type="evidence" value="ECO:0000314"/>
    <property type="project" value="CACAO"/>
</dbReference>
<dbReference type="GO" id="GO:0098994">
    <property type="term" value="P:symbiont entry into host cell via disruption of host cell envelope"/>
    <property type="evidence" value="ECO:0007669"/>
    <property type="project" value="UniProtKB-KW"/>
</dbReference>
<dbReference type="GO" id="GO:0098932">
    <property type="term" value="P:symbiont entry into host cell via disruption of host cell wall peptidoglycan"/>
    <property type="evidence" value="ECO:0007669"/>
    <property type="project" value="UniProtKB-KW"/>
</dbReference>
<organism>
    <name type="scientific">Pseudoalteromonas phage PM2</name>
    <name type="common">Bacteriophage PM2</name>
    <dbReference type="NCBI Taxonomy" id="2905728"/>
    <lineage>
        <taxon>Viruses</taxon>
        <taxon>Varidnaviria</taxon>
        <taxon>Bamfordvirae</taxon>
        <taxon>Preplasmiviricota</taxon>
        <taxon>Tectiliviricetes</taxon>
        <taxon>Vinavirales</taxon>
        <taxon>Corticoviridae</taxon>
        <taxon>Corticovirus</taxon>
        <taxon>Corticovirus PM2</taxon>
    </lineage>
</organism>
<evidence type="ECO:0000255" key="1"/>
<evidence type="ECO:0000269" key="2">
    <source>
    </source>
</evidence>
<evidence type="ECO:0000305" key="3"/>
<evidence type="ECO:0000305" key="4">
    <source>
    </source>
</evidence>
<comment type="function">
    <text evidence="2">Exolysin that catalyzes the cleavage of the host peptidoglycans during virus entry.</text>
</comment>
<comment type="subcellular location">
    <subcellularLocation>
        <location evidence="4">Virion membrane</location>
        <topology evidence="4">Single-pass membrane protein</topology>
    </subcellularLocation>
    <text evidence="3">Part of the capsid inner membrane.</text>
</comment>
<sequence>MINKTTIKTVLITLGVLAAVNKVSALRSVKRLIS</sequence>
<accession>Q9XJR8</accession>